<reference key="1">
    <citation type="journal article" date="1999" name="Science">
        <title>Genome sequence of the radioresistant bacterium Deinococcus radiodurans R1.</title>
        <authorList>
            <person name="White O."/>
            <person name="Eisen J.A."/>
            <person name="Heidelberg J.F."/>
            <person name="Hickey E.K."/>
            <person name="Peterson J.D."/>
            <person name="Dodson R.J."/>
            <person name="Haft D.H."/>
            <person name="Gwinn M.L."/>
            <person name="Nelson W.C."/>
            <person name="Richardson D.L."/>
            <person name="Moffat K.S."/>
            <person name="Qin H."/>
            <person name="Jiang L."/>
            <person name="Pamphile W."/>
            <person name="Crosby M."/>
            <person name="Shen M."/>
            <person name="Vamathevan J.J."/>
            <person name="Lam P."/>
            <person name="McDonald L.A."/>
            <person name="Utterback T.R."/>
            <person name="Zalewski C."/>
            <person name="Makarova K.S."/>
            <person name="Aravind L."/>
            <person name="Daly M.J."/>
            <person name="Minton K.W."/>
            <person name="Fleischmann R.D."/>
            <person name="Ketchum K.A."/>
            <person name="Nelson K.E."/>
            <person name="Salzberg S.L."/>
            <person name="Smith H.O."/>
            <person name="Venter J.C."/>
            <person name="Fraser C.M."/>
        </authorList>
    </citation>
    <scope>NUCLEOTIDE SEQUENCE [LARGE SCALE GENOMIC DNA]</scope>
    <source>
        <strain>ATCC 13939 / DSM 20539 / JCM 16871 / CCUG 27074 / LMG 4051 / NBRC 15346 / NCIMB 9279 / VKM B-1422 / R1</strain>
    </source>
</reference>
<reference key="2">
    <citation type="journal article" date="2001" name="Cell">
        <title>High resolution structure of the large ribosomal subunit from a mesophilic eubacterium.</title>
        <authorList>
            <person name="Harms J."/>
            <person name="Schluenzen F."/>
            <person name="Zarivach R."/>
            <person name="Bashan A."/>
            <person name="Gat S."/>
            <person name="Agmon I."/>
            <person name="Bartels H."/>
            <person name="Franceschi F."/>
            <person name="Yonath A."/>
        </authorList>
    </citation>
    <scope>X-RAY CRYSTALLOGRAPHY (3.1 ANGSTROMS) OF THE 50S SUBUNIT</scope>
    <scope>PROTEIN SEQUENCE OF 1-5</scope>
    <source>
        <strain>ATCC 13939 / DSM 20539 / JCM 16871 / CCUG 27074 / LMG 4051 / NBRC 15346 / NCIMB 9279 / VKM B-1422 / R1</strain>
    </source>
</reference>
<reference key="3">
    <citation type="journal article" date="2001" name="Nature">
        <title>Structural basis for the interaction of antibiotics with the peptidyl transferase centre in eubacteria.</title>
        <authorList>
            <person name="Schluenzen F."/>
            <person name="Zarivach R."/>
            <person name="Harms J."/>
            <person name="Bashan A."/>
            <person name="Tocilj A."/>
            <person name="Albrecht R."/>
            <person name="Yonath A."/>
            <person name="Franceschi F."/>
        </authorList>
    </citation>
    <scope>X-RAY CRYSTALLOGRAPHY (3.1 ANGSTROMS) OF THE 50S SUBUNIT IN COMPLEX WITH FIVE ANTIBIOTICS</scope>
    <source>
        <strain>ATCC 13939 / DSM 20539 / JCM 16871 / CCUG 27074 / LMG 4051 / NBRC 15346 / NCIMB 9279 / VKM B-1422 / R1</strain>
    </source>
</reference>
<reference key="4">
    <citation type="journal article" date="2003" name="Mol. Cell">
        <title>Structural basis of the ribosomal machinery for peptide bond formation, translocation, and nascent chain progression.</title>
        <authorList>
            <person name="Bashan A."/>
            <person name="Agmon I."/>
            <person name="Zarivach R."/>
            <person name="Schluenzen F."/>
            <person name="Harms J."/>
            <person name="Berisio R."/>
            <person name="Bartels H."/>
            <person name="Franceschi F."/>
            <person name="Auerbach T."/>
            <person name="Hansen H.A."/>
            <person name="Kossoy E."/>
            <person name="Kessler M."/>
            <person name="Yonath A."/>
        </authorList>
    </citation>
    <scope>X-RAY CRYSTALLOGRAPHY (3.5 ANGSTROMS) OF THE 50S SUBUNIT IN COMPLEX WITH TRNA MIMICS</scope>
    <source>
        <strain>ATCC 13939 / DSM 20539 / JCM 16871 / CCUG 27074 / LMG 4051 / NBRC 15346 / NCIMB 9279 / VKM B-1422 / R1</strain>
    </source>
</reference>
<reference key="5">
    <citation type="journal article" date="2003" name="Structure">
        <title>Structural basis for the antibiotic activity of ketolides and azalides.</title>
        <authorList>
            <person name="Schluenzen F."/>
            <person name="Harms J.M."/>
            <person name="Franceschi F."/>
            <person name="Hansen H.A."/>
            <person name="Bartels H."/>
            <person name="Zarivach R."/>
            <person name="Yonath A."/>
        </authorList>
    </citation>
    <scope>X-RAY CRYSTALLOGRAPHY (3.3 ANGSTROMS) OF THE 50S SUBUNIT IN COMPLEX WITH MODIFIED MACROLIDE ANTIBIOTICS</scope>
    <source>
        <strain>ATCC 13939 / DSM 20539 / JCM 16871 / CCUG 27074 / LMG 4051 / NBRC 15346 / NCIMB 9279 / VKM B-1422 / R1</strain>
    </source>
</reference>
<reference key="6">
    <citation type="journal article" date="2003" name="Nat. Struct. Biol.">
        <title>Structural insight into the role of the ribosomal tunnel in cellular regulation.</title>
        <authorList>
            <person name="Berisio R."/>
            <person name="Schluenzen F."/>
            <person name="Harms J."/>
            <person name="Bashan A."/>
            <person name="Auerbach T."/>
            <person name="Baram D."/>
            <person name="Yonath A."/>
        </authorList>
    </citation>
    <scope>X-RAY CRYSTALLOGRAPHY (3.4 ANGSTROMS) OF THE 50S SUBUNIT IN COMPLEX WITH TROLEANDOMYCIN</scope>
    <source>
        <strain>ATCC 13939 / DSM 20539 / JCM 16871 / CCUG 27074 / LMG 4051 / NBRC 15346 / NCIMB 9279 / VKM B-1422 / R1</strain>
    </source>
</reference>
<reference key="7">
    <citation type="journal article" date="2004" name="BMC Biol.">
        <title>Alterations at the peptidyl transferase centre of the ribosome induced by the synergistic action of the streptogramins dalfopristin and quinupristin.</title>
        <authorList>
            <person name="Harms J.M."/>
            <person name="Schluenzen F."/>
            <person name="Fucini P."/>
            <person name="Bartels H."/>
            <person name="Yonath A."/>
        </authorList>
    </citation>
    <scope>X-RAY CRYSTALLOGRAPHY (3.4 ANGSTROMS) OF THE 50S SUBUNIT IN COMPLEX WITH THE STREPTOGRAMINS QUINUPRISTIN AND DALFOPRISTIN</scope>
    <source>
        <strain>ATCC 13939 / DSM 20539 / JCM 16871 / CCUG 27074 / LMG 4051 / NBRC 15346 / NCIMB 9279 / VKM B-1422 / R1</strain>
    </source>
</reference>
<reference key="8">
    <citation type="journal article" date="2004" name="Mol. Microbiol.">
        <title>Inhibition of peptide bond formation by pleuromutilins: the structure of the 50S ribosomal subunit from Deinococcus radiodurans in complex with tiamulin.</title>
        <authorList>
            <person name="Schluenzen F."/>
            <person name="Pyetan E."/>
            <person name="Fucini P."/>
            <person name="Yonath A."/>
            <person name="Harms J.M."/>
        </authorList>
    </citation>
    <scope>X-RAY CRYSTALLOGRAPHY (3.5 ANGSTROMS) OF THE 50S SUBUNIT IN COMPLEX WITH TIAMULIN</scope>
    <source>
        <strain>ATCC 13939 / DSM 20539 / JCM 16871 / CCUG 27074 / LMG 4051 / NBRC 15346 / NCIMB 9279 / VKM B-1422 / R1</strain>
    </source>
</reference>
<feature type="chain" id="PRO_0000170157" description="Large ribosomal subunit protein bL33">
    <location>
        <begin position="1"/>
        <end position="55"/>
    </location>
</feature>
<feature type="strand" evidence="8">
    <location>
        <begin position="6"/>
        <end position="16"/>
    </location>
</feature>
<feature type="strand" evidence="9">
    <location>
        <begin position="18"/>
        <end position="20"/>
    </location>
</feature>
<feature type="strand" evidence="8">
    <location>
        <begin position="21"/>
        <end position="26"/>
    </location>
</feature>
<feature type="strand" evidence="8">
    <location>
        <begin position="28"/>
        <end position="30"/>
    </location>
</feature>
<feature type="strand" evidence="10">
    <location>
        <begin position="37"/>
        <end position="40"/>
    </location>
</feature>
<feature type="strand" evidence="10">
    <location>
        <begin position="43"/>
        <end position="46"/>
    </location>
</feature>
<feature type="strand" evidence="10">
    <location>
        <begin position="48"/>
        <end position="51"/>
    </location>
</feature>
<keyword id="KW-0002">3D-structure</keyword>
<keyword id="KW-0903">Direct protein sequencing</keyword>
<keyword id="KW-1185">Reference proteome</keyword>
<keyword id="KW-0687">Ribonucleoprotein</keyword>
<keyword id="KW-0689">Ribosomal protein</keyword>
<keyword id="KW-0694">RNA-binding</keyword>
<keyword id="KW-0699">rRNA-binding</keyword>
<keyword id="KW-0820">tRNA-binding</keyword>
<sequence>MAKDGPRIIVKMESSAGTGFYYTTTKNRRNTQAKLELKKYDPVAKKHVVFREKKV</sequence>
<evidence type="ECO:0000269" key="1">
    <source>
    </source>
</evidence>
<evidence type="ECO:0000269" key="2">
    <source>
    </source>
</evidence>
<evidence type="ECO:0000269" key="3">
    <source>
    </source>
</evidence>
<evidence type="ECO:0000269" key="4">
    <source>
    </source>
</evidence>
<evidence type="ECO:0000269" key="5">
    <source>
    </source>
</evidence>
<evidence type="ECO:0000269" key="6">
    <source>
    </source>
</evidence>
<evidence type="ECO:0000305" key="7"/>
<evidence type="ECO:0007829" key="8">
    <source>
        <dbReference type="PDB" id="5DM6"/>
    </source>
</evidence>
<evidence type="ECO:0007829" key="9">
    <source>
        <dbReference type="PDB" id="5JVG"/>
    </source>
</evidence>
<evidence type="ECO:0007829" key="10">
    <source>
        <dbReference type="PDB" id="7A0S"/>
    </source>
</evidence>
<gene>
    <name type="primary">rpmG</name>
    <name type="ordered locus">DR_2049</name>
</gene>
<protein>
    <recommendedName>
        <fullName evidence="7">Large ribosomal subunit protein bL33</fullName>
    </recommendedName>
    <alternativeName>
        <fullName>50S ribosomal protein L33</fullName>
    </alternativeName>
</protein>
<accession>Q9RSS4</accession>
<dbReference type="EMBL" id="AE000513">
    <property type="protein sequence ID" value="AAF11599.1"/>
    <property type="status" value="ALT_INIT"/>
    <property type="molecule type" value="Genomic_DNA"/>
</dbReference>
<dbReference type="PIR" id="D75321">
    <property type="entry name" value="D75321"/>
</dbReference>
<dbReference type="RefSeq" id="NP_295772.2">
    <property type="nucleotide sequence ID" value="NC_001263.1"/>
</dbReference>
<dbReference type="RefSeq" id="WP_010888681.1">
    <property type="nucleotide sequence ID" value="NC_001263.1"/>
</dbReference>
<dbReference type="PDB" id="1NKW">
    <property type="method" value="X-ray"/>
    <property type="resolution" value="3.10 A"/>
    <property type="chains" value="1=1-55"/>
</dbReference>
<dbReference type="PDB" id="1NWX">
    <property type="method" value="X-ray"/>
    <property type="resolution" value="3.50 A"/>
    <property type="chains" value="1=1-55"/>
</dbReference>
<dbReference type="PDB" id="1NWY">
    <property type="method" value="X-ray"/>
    <property type="resolution" value="3.30 A"/>
    <property type="chains" value="1=1-55"/>
</dbReference>
<dbReference type="PDB" id="1SM1">
    <property type="method" value="X-ray"/>
    <property type="resolution" value="3.42 A"/>
    <property type="chains" value="1=1-55"/>
</dbReference>
<dbReference type="PDB" id="1XBP">
    <property type="method" value="X-ray"/>
    <property type="resolution" value="3.50 A"/>
    <property type="chains" value="1=1-55"/>
</dbReference>
<dbReference type="PDB" id="2ZJP">
    <property type="method" value="X-ray"/>
    <property type="resolution" value="3.70 A"/>
    <property type="chains" value="1=1-55"/>
</dbReference>
<dbReference type="PDB" id="2ZJQ">
    <property type="method" value="X-ray"/>
    <property type="resolution" value="3.30 A"/>
    <property type="chains" value="1=1-55"/>
</dbReference>
<dbReference type="PDB" id="2ZJR">
    <property type="method" value="X-ray"/>
    <property type="resolution" value="2.91 A"/>
    <property type="chains" value="1=1-55"/>
</dbReference>
<dbReference type="PDB" id="3CF5">
    <property type="method" value="X-ray"/>
    <property type="resolution" value="3.30 A"/>
    <property type="chains" value="1=1-55"/>
</dbReference>
<dbReference type="PDB" id="3DLL">
    <property type="method" value="X-ray"/>
    <property type="resolution" value="3.50 A"/>
    <property type="chains" value="1=1-55"/>
</dbReference>
<dbReference type="PDB" id="3PIO">
    <property type="method" value="X-ray"/>
    <property type="resolution" value="3.25 A"/>
    <property type="chains" value="1=1-55"/>
</dbReference>
<dbReference type="PDB" id="3PIP">
    <property type="method" value="X-ray"/>
    <property type="resolution" value="3.45 A"/>
    <property type="chains" value="1=1-55"/>
</dbReference>
<dbReference type="PDB" id="4IO9">
    <property type="method" value="X-ray"/>
    <property type="resolution" value="3.20 A"/>
    <property type="chains" value="1=1-55"/>
</dbReference>
<dbReference type="PDB" id="4IOA">
    <property type="method" value="X-ray"/>
    <property type="resolution" value="3.20 A"/>
    <property type="chains" value="1=1-55"/>
</dbReference>
<dbReference type="PDB" id="4IOC">
    <property type="method" value="X-ray"/>
    <property type="resolution" value="3.60 A"/>
    <property type="chains" value="1=1-55"/>
</dbReference>
<dbReference type="PDB" id="4U67">
    <property type="method" value="X-ray"/>
    <property type="resolution" value="3.65 A"/>
    <property type="chains" value="1=1-55"/>
</dbReference>
<dbReference type="PDB" id="4V49">
    <property type="method" value="X-ray"/>
    <property type="resolution" value="8.70 A"/>
    <property type="chains" value="1=2-54"/>
</dbReference>
<dbReference type="PDB" id="4V4A">
    <property type="method" value="X-ray"/>
    <property type="resolution" value="9.50 A"/>
    <property type="chains" value="1=2-54"/>
</dbReference>
<dbReference type="PDB" id="4V4G">
    <property type="method" value="X-ray"/>
    <property type="resolution" value="11.50 A"/>
    <property type="chains" value="3=2-54"/>
</dbReference>
<dbReference type="PDB" id="4V4R">
    <property type="method" value="X-ray"/>
    <property type="resolution" value="5.90 A"/>
    <property type="chains" value="6=1-55"/>
</dbReference>
<dbReference type="PDB" id="4V4S">
    <property type="method" value="X-ray"/>
    <property type="resolution" value="6.76 A"/>
    <property type="chains" value="6=1-55"/>
</dbReference>
<dbReference type="PDB" id="4V4T">
    <property type="method" value="X-ray"/>
    <property type="resolution" value="6.46 A"/>
    <property type="chains" value="6=1-55"/>
</dbReference>
<dbReference type="PDB" id="4WFN">
    <property type="method" value="X-ray"/>
    <property type="resolution" value="3.54 A"/>
    <property type="chains" value="1=1-55"/>
</dbReference>
<dbReference type="PDB" id="5DM6">
    <property type="method" value="X-ray"/>
    <property type="resolution" value="2.90 A"/>
    <property type="chains" value="1=6-50"/>
</dbReference>
<dbReference type="PDB" id="5DM7">
    <property type="method" value="X-ray"/>
    <property type="resolution" value="3.00 A"/>
    <property type="chains" value="1=6-49"/>
</dbReference>
<dbReference type="PDB" id="5JVG">
    <property type="method" value="X-ray"/>
    <property type="resolution" value="3.43 A"/>
    <property type="chains" value="1=1-55"/>
</dbReference>
<dbReference type="PDB" id="5JVH">
    <property type="method" value="X-ray"/>
    <property type="resolution" value="3.58 A"/>
    <property type="chains" value="1=2-55"/>
</dbReference>
<dbReference type="PDB" id="7A0R">
    <property type="method" value="X-ray"/>
    <property type="resolution" value="3.30 A"/>
    <property type="chains" value="1=6-54"/>
</dbReference>
<dbReference type="PDB" id="7A0S">
    <property type="method" value="X-ray"/>
    <property type="resolution" value="3.22 A"/>
    <property type="chains" value="1=6-54"/>
</dbReference>
<dbReference type="PDB" id="7A18">
    <property type="method" value="X-ray"/>
    <property type="resolution" value="3.40 A"/>
    <property type="chains" value="1=6-54"/>
</dbReference>
<dbReference type="PDBsum" id="1NKW"/>
<dbReference type="PDBsum" id="1NWX"/>
<dbReference type="PDBsum" id="1NWY"/>
<dbReference type="PDBsum" id="1SM1"/>
<dbReference type="PDBsum" id="1XBP"/>
<dbReference type="PDBsum" id="2ZJP"/>
<dbReference type="PDBsum" id="2ZJQ"/>
<dbReference type="PDBsum" id="2ZJR"/>
<dbReference type="PDBsum" id="3CF5"/>
<dbReference type="PDBsum" id="3DLL"/>
<dbReference type="PDBsum" id="3PIO"/>
<dbReference type="PDBsum" id="3PIP"/>
<dbReference type="PDBsum" id="4IO9"/>
<dbReference type="PDBsum" id="4IOA"/>
<dbReference type="PDBsum" id="4IOC"/>
<dbReference type="PDBsum" id="4U67"/>
<dbReference type="PDBsum" id="4V49"/>
<dbReference type="PDBsum" id="4V4A"/>
<dbReference type="PDBsum" id="4V4G"/>
<dbReference type="PDBsum" id="4V4R"/>
<dbReference type="PDBsum" id="4V4S"/>
<dbReference type="PDBsum" id="4V4T"/>
<dbReference type="PDBsum" id="4WFN"/>
<dbReference type="PDBsum" id="5DM6"/>
<dbReference type="PDBsum" id="5DM7"/>
<dbReference type="PDBsum" id="5JVG"/>
<dbReference type="PDBsum" id="5JVH"/>
<dbReference type="PDBsum" id="7A0R"/>
<dbReference type="PDBsum" id="7A0S"/>
<dbReference type="PDBsum" id="7A18"/>
<dbReference type="SMR" id="Q9RSS4"/>
<dbReference type="IntAct" id="Q9RSS4">
    <property type="interactions" value="1"/>
</dbReference>
<dbReference type="STRING" id="243230.DR_2049"/>
<dbReference type="PaxDb" id="243230-DR_2049"/>
<dbReference type="EnsemblBacteria" id="AAF11599">
    <property type="protein sequence ID" value="AAF11599"/>
    <property type="gene ID" value="DR_2049"/>
</dbReference>
<dbReference type="GeneID" id="69518288"/>
<dbReference type="KEGG" id="dra:DR_2049"/>
<dbReference type="PATRIC" id="fig|243230.17.peg.2276"/>
<dbReference type="eggNOG" id="COG0267">
    <property type="taxonomic scope" value="Bacteria"/>
</dbReference>
<dbReference type="HOGENOM" id="CLU_190949_1_1_0"/>
<dbReference type="InParanoid" id="Q9RSS4"/>
<dbReference type="OrthoDB" id="21586at2"/>
<dbReference type="EvolutionaryTrace" id="Q9RSS4"/>
<dbReference type="Proteomes" id="UP000002524">
    <property type="component" value="Chromosome 1"/>
</dbReference>
<dbReference type="GO" id="GO:0022625">
    <property type="term" value="C:cytosolic large ribosomal subunit"/>
    <property type="evidence" value="ECO:0000318"/>
    <property type="project" value="GO_Central"/>
</dbReference>
<dbReference type="GO" id="GO:0019843">
    <property type="term" value="F:rRNA binding"/>
    <property type="evidence" value="ECO:0007669"/>
    <property type="project" value="UniProtKB-KW"/>
</dbReference>
<dbReference type="GO" id="GO:0003735">
    <property type="term" value="F:structural constituent of ribosome"/>
    <property type="evidence" value="ECO:0000318"/>
    <property type="project" value="GO_Central"/>
</dbReference>
<dbReference type="GO" id="GO:0000049">
    <property type="term" value="F:tRNA binding"/>
    <property type="evidence" value="ECO:0007669"/>
    <property type="project" value="UniProtKB-KW"/>
</dbReference>
<dbReference type="GO" id="GO:0006412">
    <property type="term" value="P:translation"/>
    <property type="evidence" value="ECO:0007669"/>
    <property type="project" value="UniProtKB-UniRule"/>
</dbReference>
<dbReference type="FunFam" id="2.20.28.120:FF:000007">
    <property type="entry name" value="50S ribosomal protein L33"/>
    <property type="match status" value="1"/>
</dbReference>
<dbReference type="Gene3D" id="2.20.28.120">
    <property type="entry name" value="Ribosomal protein L33"/>
    <property type="match status" value="1"/>
</dbReference>
<dbReference type="HAMAP" id="MF_00294">
    <property type="entry name" value="Ribosomal_bL33"/>
    <property type="match status" value="1"/>
</dbReference>
<dbReference type="InterPro" id="IPR001705">
    <property type="entry name" value="Ribosomal_bL33"/>
</dbReference>
<dbReference type="InterPro" id="IPR018264">
    <property type="entry name" value="Ribosomal_bL33_CS"/>
</dbReference>
<dbReference type="InterPro" id="IPR038584">
    <property type="entry name" value="Ribosomal_bL33_sf"/>
</dbReference>
<dbReference type="InterPro" id="IPR011332">
    <property type="entry name" value="Ribosomal_zn-bd"/>
</dbReference>
<dbReference type="NCBIfam" id="NF001860">
    <property type="entry name" value="PRK00595.1"/>
    <property type="match status" value="1"/>
</dbReference>
<dbReference type="NCBIfam" id="TIGR01023">
    <property type="entry name" value="rpmG_bact"/>
    <property type="match status" value="1"/>
</dbReference>
<dbReference type="PANTHER" id="PTHR15238">
    <property type="entry name" value="54S RIBOSOMAL PROTEIN L39, MITOCHONDRIAL"/>
    <property type="match status" value="1"/>
</dbReference>
<dbReference type="PANTHER" id="PTHR15238:SF1">
    <property type="entry name" value="LARGE RIBOSOMAL SUBUNIT PROTEIN BL33M"/>
    <property type="match status" value="1"/>
</dbReference>
<dbReference type="Pfam" id="PF00471">
    <property type="entry name" value="Ribosomal_L33"/>
    <property type="match status" value="1"/>
</dbReference>
<dbReference type="SUPFAM" id="SSF57829">
    <property type="entry name" value="Zn-binding ribosomal proteins"/>
    <property type="match status" value="1"/>
</dbReference>
<dbReference type="PROSITE" id="PS00582">
    <property type="entry name" value="RIBOSOMAL_L33"/>
    <property type="match status" value="1"/>
</dbReference>
<proteinExistence type="evidence at protein level"/>
<comment type="function">
    <text>Binds the 23S rRNA and the E site tRNA.</text>
</comment>
<comment type="subunit">
    <text evidence="1 2 3 4 5 6">Part of the 50S ribosomal subunit. Contacts protein L35.</text>
</comment>
<comment type="similarity">
    <text evidence="7">Belongs to the bacterial ribosomal protein bL33 family.</text>
</comment>
<comment type="sequence caution" evidence="7">
    <conflict type="erroneous initiation">
        <sequence resource="EMBL-CDS" id="AAF11599"/>
    </conflict>
</comment>
<organism>
    <name type="scientific">Deinococcus radiodurans (strain ATCC 13939 / DSM 20539 / JCM 16871 / CCUG 27074 / LMG 4051 / NBRC 15346 / NCIMB 9279 / VKM B-1422 / R1)</name>
    <dbReference type="NCBI Taxonomy" id="243230"/>
    <lineage>
        <taxon>Bacteria</taxon>
        <taxon>Thermotogati</taxon>
        <taxon>Deinococcota</taxon>
        <taxon>Deinococci</taxon>
        <taxon>Deinococcales</taxon>
        <taxon>Deinococcaceae</taxon>
        <taxon>Deinococcus</taxon>
    </lineage>
</organism>
<name>RL33_DEIRA</name>